<protein>
    <recommendedName>
        <fullName evidence="1">2-succinyl-5-enolpyruvyl-6-hydroxy-3-cyclohexene-1-carboxylate synthase</fullName>
        <shortName evidence="1">SEPHCHC synthase</shortName>
        <ecNumber evidence="1">2.2.1.9</ecNumber>
    </recommendedName>
</protein>
<reference key="1">
    <citation type="submission" date="2006-05" db="EMBL/GenBank/DDBJ databases">
        <authorList>
            <consortium name="Genoscope"/>
        </authorList>
    </citation>
    <scope>NUCLEOTIDE SEQUENCE [LARGE SCALE GENOMIC DNA]</scope>
    <source>
        <strain>RCC307</strain>
    </source>
</reference>
<gene>
    <name evidence="1" type="primary">menD</name>
    <name type="ordered locus">SynRCC307_1140</name>
</gene>
<feature type="chain" id="PRO_0000341875" description="2-succinyl-5-enolpyruvyl-6-hydroxy-3-cyclohexene-1-carboxylate synthase">
    <location>
        <begin position="1"/>
        <end position="574"/>
    </location>
</feature>
<accession>A5GT34</accession>
<proteinExistence type="inferred from homology"/>
<organism>
    <name type="scientific">Synechococcus sp. (strain RCC307)</name>
    <dbReference type="NCBI Taxonomy" id="316278"/>
    <lineage>
        <taxon>Bacteria</taxon>
        <taxon>Bacillati</taxon>
        <taxon>Cyanobacteriota</taxon>
        <taxon>Cyanophyceae</taxon>
        <taxon>Synechococcales</taxon>
        <taxon>Synechococcaceae</taxon>
        <taxon>Synechococcus</taxon>
    </lineage>
</organism>
<keyword id="KW-0460">Magnesium</keyword>
<keyword id="KW-0464">Manganese</keyword>
<keyword id="KW-0479">Metal-binding</keyword>
<keyword id="KW-1185">Reference proteome</keyword>
<keyword id="KW-0786">Thiamine pyrophosphate</keyword>
<keyword id="KW-0808">Transferase</keyword>
<comment type="function">
    <text evidence="1">Catalyzes the thiamine diphosphate-dependent decarboxylation of 2-oxoglutarate and the subsequent addition of the resulting succinic semialdehyde-thiamine pyrophosphate anion to isochorismate to yield 2-succinyl-5-enolpyruvyl-6-hydroxy-3-cyclohexene-1-carboxylate (SEPHCHC).</text>
</comment>
<comment type="catalytic activity">
    <reaction evidence="1">
        <text>isochorismate + 2-oxoglutarate + H(+) = 5-enolpyruvoyl-6-hydroxy-2-succinyl-cyclohex-3-ene-1-carboxylate + CO2</text>
        <dbReference type="Rhea" id="RHEA:25593"/>
        <dbReference type="ChEBI" id="CHEBI:15378"/>
        <dbReference type="ChEBI" id="CHEBI:16526"/>
        <dbReference type="ChEBI" id="CHEBI:16810"/>
        <dbReference type="ChEBI" id="CHEBI:29780"/>
        <dbReference type="ChEBI" id="CHEBI:58818"/>
        <dbReference type="EC" id="2.2.1.9"/>
    </reaction>
</comment>
<comment type="cofactor">
    <cofactor evidence="1">
        <name>Mg(2+)</name>
        <dbReference type="ChEBI" id="CHEBI:18420"/>
    </cofactor>
    <cofactor evidence="1">
        <name>Mn(2+)</name>
        <dbReference type="ChEBI" id="CHEBI:29035"/>
    </cofactor>
</comment>
<comment type="cofactor">
    <cofactor evidence="1">
        <name>thiamine diphosphate</name>
        <dbReference type="ChEBI" id="CHEBI:58937"/>
    </cofactor>
    <text evidence="1">Binds 1 thiamine pyrophosphate per subunit.</text>
</comment>
<comment type="pathway">
    <text evidence="1">Quinol/quinone metabolism; 1,4-dihydroxy-2-naphthoate biosynthesis; 1,4-dihydroxy-2-naphthoate from chorismate: step 2/7.</text>
</comment>
<comment type="pathway">
    <text evidence="1">Cofactor biosynthesis; phylloquinone biosynthesis.</text>
</comment>
<comment type="subunit">
    <text evidence="1">Homodimer.</text>
</comment>
<comment type="similarity">
    <text evidence="1">Belongs to the TPP enzyme family. MenD subfamily.</text>
</comment>
<evidence type="ECO:0000255" key="1">
    <source>
        <dbReference type="HAMAP-Rule" id="MF_01659"/>
    </source>
</evidence>
<sequence length="574" mass="61352">MSIEAAENLRAAEALLSALMGLGLQRVVLCPGSRSGPLALAASRLESHGLALTTGIDERSAGFFALGQTRADGQPTAVITTSGTAVANLLPAAVEADFSALPLLLLTADRPERLKACGANQTVNQEAYLQPACRALLQGPAAGLHDASDERLLRLAQSAMRHALGAPAGPVHLNLAFDEPLHADLSGLPAAAPPAAQELPPLFEPPGLGSLEPLDPDQPGVIVVGPWRRGHGGRFVAALQQLNRRTGWPILADASSGLRGLPLPLVSGYDLLLAEPQRLPPAHQVLRLGSMPASRRLQQWLQTFEGPQLVITEAEPRRQDPLASGCAQHPHGLAAWVELLPTGEPSATSRADAARWQQAESLLQQQLDHDLPLQGPCSEPALARALQNLIPSEWPVMLASSSPVRDWESFAGRQSGHRTIVSFRGASGIDGTLSLAAGIAQQWQRLVLVTGDLALLHDANGWLWRRQLSGELRLVVIDNGGGGVFEQLPIPRQSMDFDRLFAMPQSCDAMALAAAHGVAARDCSAMETLAADLQWLLEPGDAMRLLRCSTDRSRDAQLRQQLRDKPWWEQTPAP</sequence>
<name>MEND_SYNR3</name>
<dbReference type="EC" id="2.2.1.9" evidence="1"/>
<dbReference type="EMBL" id="CT978603">
    <property type="protein sequence ID" value="CAK28043.1"/>
    <property type="molecule type" value="Genomic_DNA"/>
</dbReference>
<dbReference type="SMR" id="A5GT34"/>
<dbReference type="STRING" id="316278.SynRCC307_1140"/>
<dbReference type="KEGG" id="syr:SynRCC307_1140"/>
<dbReference type="eggNOG" id="COG1165">
    <property type="taxonomic scope" value="Bacteria"/>
</dbReference>
<dbReference type="HOGENOM" id="CLU_006051_3_0_3"/>
<dbReference type="OrthoDB" id="9791859at2"/>
<dbReference type="UniPathway" id="UPA00995"/>
<dbReference type="UniPathway" id="UPA01057">
    <property type="reaction ID" value="UER00164"/>
</dbReference>
<dbReference type="Proteomes" id="UP000001115">
    <property type="component" value="Chromosome"/>
</dbReference>
<dbReference type="GO" id="GO:0070204">
    <property type="term" value="F:2-succinyl-5-enolpyruvyl-6-hydroxy-3-cyclohexene-1-carboxylic-acid synthase activity"/>
    <property type="evidence" value="ECO:0007669"/>
    <property type="project" value="UniProtKB-UniRule"/>
</dbReference>
<dbReference type="GO" id="GO:0000287">
    <property type="term" value="F:magnesium ion binding"/>
    <property type="evidence" value="ECO:0007669"/>
    <property type="project" value="UniProtKB-UniRule"/>
</dbReference>
<dbReference type="GO" id="GO:0030145">
    <property type="term" value="F:manganese ion binding"/>
    <property type="evidence" value="ECO:0007669"/>
    <property type="project" value="UniProtKB-UniRule"/>
</dbReference>
<dbReference type="GO" id="GO:0030976">
    <property type="term" value="F:thiamine pyrophosphate binding"/>
    <property type="evidence" value="ECO:0007669"/>
    <property type="project" value="UniProtKB-UniRule"/>
</dbReference>
<dbReference type="GO" id="GO:0009234">
    <property type="term" value="P:menaquinone biosynthetic process"/>
    <property type="evidence" value="ECO:0007669"/>
    <property type="project" value="InterPro"/>
</dbReference>
<dbReference type="GO" id="GO:0042372">
    <property type="term" value="P:phylloquinone biosynthetic process"/>
    <property type="evidence" value="ECO:0007669"/>
    <property type="project" value="UniProtKB-UniRule"/>
</dbReference>
<dbReference type="CDD" id="cd07037">
    <property type="entry name" value="TPP_PYR_MenD"/>
    <property type="match status" value="1"/>
</dbReference>
<dbReference type="CDD" id="cd02009">
    <property type="entry name" value="TPP_SHCHC_synthase"/>
    <property type="match status" value="1"/>
</dbReference>
<dbReference type="Gene3D" id="3.40.50.970">
    <property type="match status" value="2"/>
</dbReference>
<dbReference type="Gene3D" id="3.40.50.1220">
    <property type="entry name" value="TPP-binding domain"/>
    <property type="match status" value="1"/>
</dbReference>
<dbReference type="HAMAP" id="MF_01659">
    <property type="entry name" value="MenD"/>
    <property type="match status" value="1"/>
</dbReference>
<dbReference type="InterPro" id="IPR004433">
    <property type="entry name" value="MenaQ_synth_MenD"/>
</dbReference>
<dbReference type="InterPro" id="IPR032264">
    <property type="entry name" value="MenD_middle"/>
</dbReference>
<dbReference type="InterPro" id="IPR029061">
    <property type="entry name" value="THDP-binding"/>
</dbReference>
<dbReference type="InterPro" id="IPR012001">
    <property type="entry name" value="Thiamin_PyroP_enz_TPP-bd_dom"/>
</dbReference>
<dbReference type="NCBIfam" id="TIGR00173">
    <property type="entry name" value="menD"/>
    <property type="match status" value="1"/>
</dbReference>
<dbReference type="PANTHER" id="PTHR42916">
    <property type="entry name" value="2-SUCCINYL-5-ENOLPYRUVYL-6-HYDROXY-3-CYCLOHEXENE-1-CARBOXYLATE SYNTHASE"/>
    <property type="match status" value="1"/>
</dbReference>
<dbReference type="PANTHER" id="PTHR42916:SF1">
    <property type="entry name" value="PROTEIN PHYLLO, CHLOROPLASTIC"/>
    <property type="match status" value="1"/>
</dbReference>
<dbReference type="Pfam" id="PF16582">
    <property type="entry name" value="TPP_enzyme_M_2"/>
    <property type="match status" value="1"/>
</dbReference>
<dbReference type="Pfam" id="PF02776">
    <property type="entry name" value="TPP_enzyme_N"/>
    <property type="match status" value="1"/>
</dbReference>
<dbReference type="PIRSF" id="PIRSF004983">
    <property type="entry name" value="MenD"/>
    <property type="match status" value="1"/>
</dbReference>
<dbReference type="SUPFAM" id="SSF52518">
    <property type="entry name" value="Thiamin diphosphate-binding fold (THDP-binding)"/>
    <property type="match status" value="2"/>
</dbReference>